<evidence type="ECO:0000255" key="1">
    <source>
        <dbReference type="HAMAP-Rule" id="MF_00531"/>
    </source>
</evidence>
<evidence type="ECO:0000305" key="2"/>
<dbReference type="EMBL" id="BA000045">
    <property type="protein sequence ID" value="BAC88845.1"/>
    <property type="molecule type" value="Genomic_DNA"/>
</dbReference>
<dbReference type="RefSeq" id="NP_923850.1">
    <property type="nucleotide sequence ID" value="NC_005125.1"/>
</dbReference>
<dbReference type="RefSeq" id="WP_011140906.1">
    <property type="nucleotide sequence ID" value="NC_005125.1"/>
</dbReference>
<dbReference type="SMR" id="Q7NM64"/>
<dbReference type="FunCoup" id="Q7NM64">
    <property type="interactions" value="141"/>
</dbReference>
<dbReference type="STRING" id="251221.gene:10758382"/>
<dbReference type="EnsemblBacteria" id="BAC88845">
    <property type="protein sequence ID" value="BAC88845"/>
    <property type="gene ID" value="BAC88845"/>
</dbReference>
<dbReference type="KEGG" id="gvi:gsr0904"/>
<dbReference type="PATRIC" id="fig|251221.4.peg.923"/>
<dbReference type="eggNOG" id="COG0185">
    <property type="taxonomic scope" value="Bacteria"/>
</dbReference>
<dbReference type="HOGENOM" id="CLU_144911_0_1_3"/>
<dbReference type="InParanoid" id="Q7NM64"/>
<dbReference type="OrthoDB" id="9797833at2"/>
<dbReference type="PhylomeDB" id="Q7NM64"/>
<dbReference type="Proteomes" id="UP000000557">
    <property type="component" value="Chromosome"/>
</dbReference>
<dbReference type="GO" id="GO:0005737">
    <property type="term" value="C:cytoplasm"/>
    <property type="evidence" value="ECO:0007669"/>
    <property type="project" value="UniProtKB-ARBA"/>
</dbReference>
<dbReference type="GO" id="GO:0015935">
    <property type="term" value="C:small ribosomal subunit"/>
    <property type="evidence" value="ECO:0007669"/>
    <property type="project" value="InterPro"/>
</dbReference>
<dbReference type="GO" id="GO:0019843">
    <property type="term" value="F:rRNA binding"/>
    <property type="evidence" value="ECO:0007669"/>
    <property type="project" value="UniProtKB-UniRule"/>
</dbReference>
<dbReference type="GO" id="GO:0003735">
    <property type="term" value="F:structural constituent of ribosome"/>
    <property type="evidence" value="ECO:0000318"/>
    <property type="project" value="GO_Central"/>
</dbReference>
<dbReference type="GO" id="GO:0000028">
    <property type="term" value="P:ribosomal small subunit assembly"/>
    <property type="evidence" value="ECO:0000318"/>
    <property type="project" value="GO_Central"/>
</dbReference>
<dbReference type="GO" id="GO:0006412">
    <property type="term" value="P:translation"/>
    <property type="evidence" value="ECO:0007669"/>
    <property type="project" value="UniProtKB-UniRule"/>
</dbReference>
<dbReference type="FunFam" id="3.30.860.10:FF:000001">
    <property type="entry name" value="30S ribosomal protein S19"/>
    <property type="match status" value="1"/>
</dbReference>
<dbReference type="Gene3D" id="3.30.860.10">
    <property type="entry name" value="30s Ribosomal Protein S19, Chain A"/>
    <property type="match status" value="1"/>
</dbReference>
<dbReference type="HAMAP" id="MF_00531">
    <property type="entry name" value="Ribosomal_uS19"/>
    <property type="match status" value="1"/>
</dbReference>
<dbReference type="InterPro" id="IPR002222">
    <property type="entry name" value="Ribosomal_uS19"/>
</dbReference>
<dbReference type="InterPro" id="IPR005732">
    <property type="entry name" value="Ribosomal_uS19_bac-type"/>
</dbReference>
<dbReference type="InterPro" id="IPR020934">
    <property type="entry name" value="Ribosomal_uS19_CS"/>
</dbReference>
<dbReference type="InterPro" id="IPR023575">
    <property type="entry name" value="Ribosomal_uS19_SF"/>
</dbReference>
<dbReference type="NCBIfam" id="TIGR01050">
    <property type="entry name" value="rpsS_bact"/>
    <property type="match status" value="1"/>
</dbReference>
<dbReference type="PANTHER" id="PTHR11880">
    <property type="entry name" value="RIBOSOMAL PROTEIN S19P FAMILY MEMBER"/>
    <property type="match status" value="1"/>
</dbReference>
<dbReference type="PANTHER" id="PTHR11880:SF8">
    <property type="entry name" value="SMALL RIBOSOMAL SUBUNIT PROTEIN US19M"/>
    <property type="match status" value="1"/>
</dbReference>
<dbReference type="Pfam" id="PF00203">
    <property type="entry name" value="Ribosomal_S19"/>
    <property type="match status" value="1"/>
</dbReference>
<dbReference type="PIRSF" id="PIRSF002144">
    <property type="entry name" value="Ribosomal_S19"/>
    <property type="match status" value="1"/>
</dbReference>
<dbReference type="PRINTS" id="PR00975">
    <property type="entry name" value="RIBOSOMALS19"/>
</dbReference>
<dbReference type="SUPFAM" id="SSF54570">
    <property type="entry name" value="Ribosomal protein S19"/>
    <property type="match status" value="1"/>
</dbReference>
<dbReference type="PROSITE" id="PS00323">
    <property type="entry name" value="RIBOSOMAL_S19"/>
    <property type="match status" value="1"/>
</dbReference>
<proteinExistence type="inferred from homology"/>
<organism>
    <name type="scientific">Gloeobacter violaceus (strain ATCC 29082 / PCC 7421)</name>
    <dbReference type="NCBI Taxonomy" id="251221"/>
    <lineage>
        <taxon>Bacteria</taxon>
        <taxon>Bacillati</taxon>
        <taxon>Cyanobacteriota</taxon>
        <taxon>Cyanophyceae</taxon>
        <taxon>Gloeobacterales</taxon>
        <taxon>Gloeobacteraceae</taxon>
        <taxon>Gloeobacter</taxon>
    </lineage>
</organism>
<accession>Q7NM64</accession>
<comment type="function">
    <text evidence="1">Protein S19 forms a complex with S13 that binds strongly to the 16S ribosomal RNA.</text>
</comment>
<comment type="similarity">
    <text evidence="1">Belongs to the universal ribosomal protein uS19 family.</text>
</comment>
<keyword id="KW-1185">Reference proteome</keyword>
<keyword id="KW-0687">Ribonucleoprotein</keyword>
<keyword id="KW-0689">Ribosomal protein</keyword>
<keyword id="KW-0694">RNA-binding</keyword>
<keyword id="KW-0699">rRNA-binding</keyword>
<sequence>MGRSLKKGVFVADHLLRKIETMNSKNEKRVIKTWSRASTIVPQMIGHTIAVHNGKEHLPVYVTEQMVGQKLGEFVPTRVFKGHAGKDKKGKR</sequence>
<protein>
    <recommendedName>
        <fullName evidence="1">Small ribosomal subunit protein uS19</fullName>
    </recommendedName>
    <alternativeName>
        <fullName evidence="2">30S ribosomal protein S19</fullName>
    </alternativeName>
</protein>
<gene>
    <name evidence="1" type="primary">rpsS</name>
    <name evidence="1" type="synonym">rps19</name>
    <name type="ordered locus">gsr0904</name>
</gene>
<feature type="chain" id="PRO_0000129829" description="Small ribosomal subunit protein uS19">
    <location>
        <begin position="1"/>
        <end position="92"/>
    </location>
</feature>
<reference key="1">
    <citation type="journal article" date="2003" name="DNA Res.">
        <title>Complete genome structure of Gloeobacter violaceus PCC 7421, a cyanobacterium that lacks thylakoids.</title>
        <authorList>
            <person name="Nakamura Y."/>
            <person name="Kaneko T."/>
            <person name="Sato S."/>
            <person name="Mimuro M."/>
            <person name="Miyashita H."/>
            <person name="Tsuchiya T."/>
            <person name="Sasamoto S."/>
            <person name="Watanabe A."/>
            <person name="Kawashima K."/>
            <person name="Kishida Y."/>
            <person name="Kiyokawa C."/>
            <person name="Kohara M."/>
            <person name="Matsumoto M."/>
            <person name="Matsuno A."/>
            <person name="Nakazaki N."/>
            <person name="Shimpo S."/>
            <person name="Takeuchi C."/>
            <person name="Yamada M."/>
            <person name="Tabata S."/>
        </authorList>
    </citation>
    <scope>NUCLEOTIDE SEQUENCE [LARGE SCALE GENOMIC DNA]</scope>
    <source>
        <strain>ATCC 29082 / PCC 7421</strain>
    </source>
</reference>
<name>RS19_GLOVI</name>